<keyword id="KW-1185">Reference proteome</keyword>
<keyword id="KW-0687">Ribonucleoprotein</keyword>
<keyword id="KW-0689">Ribosomal protein</keyword>
<keyword id="KW-0694">RNA-binding</keyword>
<keyword id="KW-0699">rRNA-binding</keyword>
<evidence type="ECO:0000255" key="1">
    <source>
        <dbReference type="HAMAP-Rule" id="MF_00537"/>
    </source>
</evidence>
<evidence type="ECO:0000305" key="2"/>
<dbReference type="EMBL" id="CP000377">
    <property type="protein sequence ID" value="ABF63000.1"/>
    <property type="molecule type" value="Genomic_DNA"/>
</dbReference>
<dbReference type="RefSeq" id="WP_005621844.1">
    <property type="nucleotide sequence ID" value="NC_008044.1"/>
</dbReference>
<dbReference type="SMR" id="Q1GK16"/>
<dbReference type="STRING" id="292414.TM1040_0267"/>
<dbReference type="GeneID" id="28248378"/>
<dbReference type="KEGG" id="sit:TM1040_0267"/>
<dbReference type="eggNOG" id="COG0199">
    <property type="taxonomic scope" value="Bacteria"/>
</dbReference>
<dbReference type="HOGENOM" id="CLU_139869_0_1_5"/>
<dbReference type="OrthoDB" id="9810484at2"/>
<dbReference type="Proteomes" id="UP000000636">
    <property type="component" value="Chromosome"/>
</dbReference>
<dbReference type="GO" id="GO:0005737">
    <property type="term" value="C:cytoplasm"/>
    <property type="evidence" value="ECO:0007669"/>
    <property type="project" value="UniProtKB-ARBA"/>
</dbReference>
<dbReference type="GO" id="GO:0015935">
    <property type="term" value="C:small ribosomal subunit"/>
    <property type="evidence" value="ECO:0007669"/>
    <property type="project" value="TreeGrafter"/>
</dbReference>
<dbReference type="GO" id="GO:0019843">
    <property type="term" value="F:rRNA binding"/>
    <property type="evidence" value="ECO:0007669"/>
    <property type="project" value="UniProtKB-UniRule"/>
</dbReference>
<dbReference type="GO" id="GO:0003735">
    <property type="term" value="F:structural constituent of ribosome"/>
    <property type="evidence" value="ECO:0007669"/>
    <property type="project" value="InterPro"/>
</dbReference>
<dbReference type="GO" id="GO:0006412">
    <property type="term" value="P:translation"/>
    <property type="evidence" value="ECO:0007669"/>
    <property type="project" value="UniProtKB-UniRule"/>
</dbReference>
<dbReference type="FunFam" id="1.10.287.1480:FF:000001">
    <property type="entry name" value="30S ribosomal protein S14"/>
    <property type="match status" value="1"/>
</dbReference>
<dbReference type="Gene3D" id="1.10.287.1480">
    <property type="match status" value="1"/>
</dbReference>
<dbReference type="HAMAP" id="MF_00537">
    <property type="entry name" value="Ribosomal_uS14_1"/>
    <property type="match status" value="1"/>
</dbReference>
<dbReference type="InterPro" id="IPR001209">
    <property type="entry name" value="Ribosomal_uS14"/>
</dbReference>
<dbReference type="InterPro" id="IPR023036">
    <property type="entry name" value="Ribosomal_uS14_bac/plastid"/>
</dbReference>
<dbReference type="InterPro" id="IPR018271">
    <property type="entry name" value="Ribosomal_uS14_CS"/>
</dbReference>
<dbReference type="NCBIfam" id="NF006477">
    <property type="entry name" value="PRK08881.1"/>
    <property type="match status" value="1"/>
</dbReference>
<dbReference type="PANTHER" id="PTHR19836">
    <property type="entry name" value="30S RIBOSOMAL PROTEIN S14"/>
    <property type="match status" value="1"/>
</dbReference>
<dbReference type="PANTHER" id="PTHR19836:SF19">
    <property type="entry name" value="SMALL RIBOSOMAL SUBUNIT PROTEIN US14M"/>
    <property type="match status" value="1"/>
</dbReference>
<dbReference type="Pfam" id="PF00253">
    <property type="entry name" value="Ribosomal_S14"/>
    <property type="match status" value="1"/>
</dbReference>
<dbReference type="SUPFAM" id="SSF57716">
    <property type="entry name" value="Glucocorticoid receptor-like (DNA-binding domain)"/>
    <property type="match status" value="1"/>
</dbReference>
<dbReference type="PROSITE" id="PS00527">
    <property type="entry name" value="RIBOSOMAL_S14"/>
    <property type="match status" value="1"/>
</dbReference>
<feature type="chain" id="PRO_1000128593" description="Small ribosomal subunit protein uS14">
    <location>
        <begin position="1"/>
        <end position="101"/>
    </location>
</feature>
<comment type="function">
    <text evidence="1">Binds 16S rRNA, required for the assembly of 30S particles and may also be responsible for determining the conformation of the 16S rRNA at the A site.</text>
</comment>
<comment type="subunit">
    <text evidence="1">Part of the 30S ribosomal subunit. Contacts proteins S3 and S10.</text>
</comment>
<comment type="similarity">
    <text evidence="1">Belongs to the universal ribosomal protein uS14 family.</text>
</comment>
<organism>
    <name type="scientific">Ruegeria sp. (strain TM1040)</name>
    <name type="common">Silicibacter sp.</name>
    <dbReference type="NCBI Taxonomy" id="292414"/>
    <lineage>
        <taxon>Bacteria</taxon>
        <taxon>Pseudomonadati</taxon>
        <taxon>Pseudomonadota</taxon>
        <taxon>Alphaproteobacteria</taxon>
        <taxon>Rhodobacterales</taxon>
        <taxon>Roseobacteraceae</taxon>
        <taxon>Ruegeria</taxon>
    </lineage>
</organism>
<accession>Q1GK16</accession>
<protein>
    <recommendedName>
        <fullName evidence="1">Small ribosomal subunit protein uS14</fullName>
    </recommendedName>
    <alternativeName>
        <fullName evidence="2">30S ribosomal protein S14</fullName>
    </alternativeName>
</protein>
<name>RS14_RUEST</name>
<proteinExistence type="inferred from homology"/>
<gene>
    <name evidence="1" type="primary">rpsN</name>
    <name type="ordered locus">TM1040_0267</name>
</gene>
<sequence>MAKKAMIEREKKRERLVAKYAAKRAELKEIANDESRPMEERFKARLKLAKLPRNSSATRLHNRCQLTGRPHAYYRKLKVSRIALRELGSNGQIPGMVKSSW</sequence>
<reference key="1">
    <citation type="submission" date="2006-05" db="EMBL/GenBank/DDBJ databases">
        <title>Complete sequence of chromosome of Silicibacter sp. TM1040.</title>
        <authorList>
            <consortium name="US DOE Joint Genome Institute"/>
            <person name="Copeland A."/>
            <person name="Lucas S."/>
            <person name="Lapidus A."/>
            <person name="Barry K."/>
            <person name="Detter J.C."/>
            <person name="Glavina del Rio T."/>
            <person name="Hammon N."/>
            <person name="Israni S."/>
            <person name="Dalin E."/>
            <person name="Tice H."/>
            <person name="Pitluck S."/>
            <person name="Brettin T."/>
            <person name="Bruce D."/>
            <person name="Han C."/>
            <person name="Tapia R."/>
            <person name="Goodwin L."/>
            <person name="Thompson L.S."/>
            <person name="Gilna P."/>
            <person name="Schmutz J."/>
            <person name="Larimer F."/>
            <person name="Land M."/>
            <person name="Hauser L."/>
            <person name="Kyrpides N."/>
            <person name="Kim E."/>
            <person name="Belas R."/>
            <person name="Moran M.A."/>
            <person name="Buchan A."/>
            <person name="Gonzalez J.M."/>
            <person name="Schell M.A."/>
            <person name="Sun F."/>
            <person name="Richardson P."/>
        </authorList>
    </citation>
    <scope>NUCLEOTIDE SEQUENCE [LARGE SCALE GENOMIC DNA]</scope>
    <source>
        <strain>TM1040</strain>
    </source>
</reference>